<name>RL34_CLOK5</name>
<accession>A5N456</accession>
<evidence type="ECO:0000255" key="1">
    <source>
        <dbReference type="HAMAP-Rule" id="MF_00391"/>
    </source>
</evidence>
<evidence type="ECO:0000256" key="2">
    <source>
        <dbReference type="SAM" id="MobiDB-lite"/>
    </source>
</evidence>
<evidence type="ECO:0000305" key="3"/>
<reference key="1">
    <citation type="journal article" date="2008" name="Proc. Natl. Acad. Sci. U.S.A.">
        <title>The genome of Clostridium kluyveri, a strict anaerobe with unique metabolic features.</title>
        <authorList>
            <person name="Seedorf H."/>
            <person name="Fricke W.F."/>
            <person name="Veith B."/>
            <person name="Brueggemann H."/>
            <person name="Liesegang H."/>
            <person name="Strittmatter A."/>
            <person name="Miethke M."/>
            <person name="Buckel W."/>
            <person name="Hinderberger J."/>
            <person name="Li F."/>
            <person name="Hagemeier C."/>
            <person name="Thauer R.K."/>
            <person name="Gottschalk G."/>
        </authorList>
    </citation>
    <scope>NUCLEOTIDE SEQUENCE [LARGE SCALE GENOMIC DNA]</scope>
    <source>
        <strain>ATCC 8527 / DSM 555 / NBRC 12016 / NCIMB 10680 / K1</strain>
    </source>
</reference>
<dbReference type="EMBL" id="CP000673">
    <property type="protein sequence ID" value="EDK35902.1"/>
    <property type="molecule type" value="Genomic_DNA"/>
</dbReference>
<dbReference type="RefSeq" id="WP_012104240.1">
    <property type="nucleotide sequence ID" value="NC_009706.1"/>
</dbReference>
<dbReference type="SMR" id="A5N456"/>
<dbReference type="STRING" id="431943.CKL_3926"/>
<dbReference type="KEGG" id="ckl:CKL_3926"/>
<dbReference type="eggNOG" id="COG0230">
    <property type="taxonomic scope" value="Bacteria"/>
</dbReference>
<dbReference type="HOGENOM" id="CLU_129938_2_0_9"/>
<dbReference type="Proteomes" id="UP000002411">
    <property type="component" value="Chromosome"/>
</dbReference>
<dbReference type="GO" id="GO:1990904">
    <property type="term" value="C:ribonucleoprotein complex"/>
    <property type="evidence" value="ECO:0007669"/>
    <property type="project" value="UniProtKB-KW"/>
</dbReference>
<dbReference type="GO" id="GO:0005840">
    <property type="term" value="C:ribosome"/>
    <property type="evidence" value="ECO:0007669"/>
    <property type="project" value="UniProtKB-KW"/>
</dbReference>
<dbReference type="GO" id="GO:0003735">
    <property type="term" value="F:structural constituent of ribosome"/>
    <property type="evidence" value="ECO:0007669"/>
    <property type="project" value="InterPro"/>
</dbReference>
<dbReference type="GO" id="GO:0006412">
    <property type="term" value="P:translation"/>
    <property type="evidence" value="ECO:0007669"/>
    <property type="project" value="UniProtKB-UniRule"/>
</dbReference>
<dbReference type="FunFam" id="1.10.287.3980:FF:000001">
    <property type="entry name" value="Mitochondrial ribosomal protein L34"/>
    <property type="match status" value="1"/>
</dbReference>
<dbReference type="Gene3D" id="1.10.287.3980">
    <property type="match status" value="1"/>
</dbReference>
<dbReference type="HAMAP" id="MF_00391">
    <property type="entry name" value="Ribosomal_bL34"/>
    <property type="match status" value="1"/>
</dbReference>
<dbReference type="InterPro" id="IPR000271">
    <property type="entry name" value="Ribosomal_bL34"/>
</dbReference>
<dbReference type="NCBIfam" id="TIGR01030">
    <property type="entry name" value="rpmH_bact"/>
    <property type="match status" value="1"/>
</dbReference>
<dbReference type="PANTHER" id="PTHR14503:SF4">
    <property type="entry name" value="LARGE RIBOSOMAL SUBUNIT PROTEIN BL34M"/>
    <property type="match status" value="1"/>
</dbReference>
<dbReference type="PANTHER" id="PTHR14503">
    <property type="entry name" value="MITOCHONDRIAL RIBOSOMAL PROTEIN 34 FAMILY MEMBER"/>
    <property type="match status" value="1"/>
</dbReference>
<dbReference type="Pfam" id="PF00468">
    <property type="entry name" value="Ribosomal_L34"/>
    <property type="match status" value="1"/>
</dbReference>
<protein>
    <recommendedName>
        <fullName evidence="1">Large ribosomal subunit protein bL34</fullName>
    </recommendedName>
    <alternativeName>
        <fullName evidence="3">50S ribosomal protein L34</fullName>
    </alternativeName>
</protein>
<feature type="chain" id="PRO_1000080245" description="Large ribosomal subunit protein bL34">
    <location>
        <begin position="1"/>
        <end position="44"/>
    </location>
</feature>
<feature type="region of interest" description="Disordered" evidence="2">
    <location>
        <begin position="1"/>
        <end position="20"/>
    </location>
</feature>
<feature type="compositionally biased region" description="Basic residues" evidence="2">
    <location>
        <begin position="7"/>
        <end position="20"/>
    </location>
</feature>
<sequence length="44" mass="5585">MWMTYQPKKKQRKREHGFRKRMRTLSGRNVIKRRRQKGRKRLTA</sequence>
<comment type="similarity">
    <text evidence="1">Belongs to the bacterial ribosomal protein bL34 family.</text>
</comment>
<organism>
    <name type="scientific">Clostridium kluyveri (strain ATCC 8527 / DSM 555 / NBRC 12016 / NCIMB 10680 / K1)</name>
    <dbReference type="NCBI Taxonomy" id="431943"/>
    <lineage>
        <taxon>Bacteria</taxon>
        <taxon>Bacillati</taxon>
        <taxon>Bacillota</taxon>
        <taxon>Clostridia</taxon>
        <taxon>Eubacteriales</taxon>
        <taxon>Clostridiaceae</taxon>
        <taxon>Clostridium</taxon>
    </lineage>
</organism>
<proteinExistence type="inferred from homology"/>
<keyword id="KW-1185">Reference proteome</keyword>
<keyword id="KW-0687">Ribonucleoprotein</keyword>
<keyword id="KW-0689">Ribosomal protein</keyword>
<gene>
    <name evidence="1" type="primary">rpmH</name>
    <name type="ordered locus">CKL_3926</name>
</gene>